<keyword id="KW-0963">Cytoplasm</keyword>
<keyword id="KW-0489">Methyltransferase</keyword>
<keyword id="KW-0698">rRNA processing</keyword>
<keyword id="KW-0949">S-adenosyl-L-methionine</keyword>
<keyword id="KW-0808">Transferase</keyword>
<proteinExistence type="inferred from homology"/>
<organism>
    <name type="scientific">Prochlorococcus marinus (strain MIT 9215)</name>
    <dbReference type="NCBI Taxonomy" id="93060"/>
    <lineage>
        <taxon>Bacteria</taxon>
        <taxon>Bacillati</taxon>
        <taxon>Cyanobacteriota</taxon>
        <taxon>Cyanophyceae</taxon>
        <taxon>Synechococcales</taxon>
        <taxon>Prochlorococcaceae</taxon>
        <taxon>Prochlorococcus</taxon>
    </lineage>
</organism>
<feature type="chain" id="PRO_1000061822" description="Ribosomal RNA large subunit methyltransferase H">
    <location>
        <begin position="1"/>
        <end position="138"/>
    </location>
</feature>
<feature type="binding site" evidence="1">
    <location>
        <position position="86"/>
    </location>
    <ligand>
        <name>S-adenosyl-L-methionine</name>
        <dbReference type="ChEBI" id="CHEBI:59789"/>
    </ligand>
</feature>
<feature type="binding site" evidence="1">
    <location>
        <begin position="105"/>
        <end position="110"/>
    </location>
    <ligand>
        <name>S-adenosyl-L-methionine</name>
        <dbReference type="ChEBI" id="CHEBI:59789"/>
    </ligand>
</feature>
<sequence>MLQSNRFAIYAIGKIKKHWIRDGINQYKKRMPELIINELKTFNLNNLRSNNNIIIVLSEEGKQFNSIELCSLLLNFKNKKINFLIGDTDGISSDIKENSDLILSLSPLTFPHELARLILIEQIYRAVSISSNSPYHRS</sequence>
<dbReference type="EC" id="2.1.1.177" evidence="1"/>
<dbReference type="EMBL" id="CP000825">
    <property type="protein sequence ID" value="ABV50570.1"/>
    <property type="molecule type" value="Genomic_DNA"/>
</dbReference>
<dbReference type="RefSeq" id="WP_012007661.1">
    <property type="nucleotide sequence ID" value="NC_009840.1"/>
</dbReference>
<dbReference type="SMR" id="A8G4N9"/>
<dbReference type="STRING" id="93060.P9215_09551"/>
<dbReference type="KEGG" id="pmh:P9215_09551"/>
<dbReference type="eggNOG" id="COG1576">
    <property type="taxonomic scope" value="Bacteria"/>
</dbReference>
<dbReference type="HOGENOM" id="CLU_100552_2_0_3"/>
<dbReference type="OrthoDB" id="9806643at2"/>
<dbReference type="Proteomes" id="UP000002014">
    <property type="component" value="Chromosome"/>
</dbReference>
<dbReference type="GO" id="GO:0005737">
    <property type="term" value="C:cytoplasm"/>
    <property type="evidence" value="ECO:0007669"/>
    <property type="project" value="UniProtKB-SubCell"/>
</dbReference>
<dbReference type="GO" id="GO:0070038">
    <property type="term" value="F:rRNA (pseudouridine-N3-)-methyltransferase activity"/>
    <property type="evidence" value="ECO:0007669"/>
    <property type="project" value="UniProtKB-UniRule"/>
</dbReference>
<dbReference type="CDD" id="cd18081">
    <property type="entry name" value="RlmH-like"/>
    <property type="match status" value="1"/>
</dbReference>
<dbReference type="Gene3D" id="3.40.1280.10">
    <property type="match status" value="1"/>
</dbReference>
<dbReference type="HAMAP" id="MF_00658">
    <property type="entry name" value="23SrRNA_methyltr_H"/>
    <property type="match status" value="1"/>
</dbReference>
<dbReference type="InterPro" id="IPR029028">
    <property type="entry name" value="Alpha/beta_knot_MTases"/>
</dbReference>
<dbReference type="InterPro" id="IPR003742">
    <property type="entry name" value="RlmH-like"/>
</dbReference>
<dbReference type="InterPro" id="IPR029026">
    <property type="entry name" value="tRNA_m1G_MTases_N"/>
</dbReference>
<dbReference type="PANTHER" id="PTHR33603">
    <property type="entry name" value="METHYLTRANSFERASE"/>
    <property type="match status" value="1"/>
</dbReference>
<dbReference type="PANTHER" id="PTHR33603:SF1">
    <property type="entry name" value="RIBOSOMAL RNA LARGE SUBUNIT METHYLTRANSFERASE H"/>
    <property type="match status" value="1"/>
</dbReference>
<dbReference type="Pfam" id="PF02590">
    <property type="entry name" value="SPOUT_MTase"/>
    <property type="match status" value="1"/>
</dbReference>
<dbReference type="PIRSF" id="PIRSF004505">
    <property type="entry name" value="MT_bac"/>
    <property type="match status" value="1"/>
</dbReference>
<dbReference type="SUPFAM" id="SSF75217">
    <property type="entry name" value="alpha/beta knot"/>
    <property type="match status" value="1"/>
</dbReference>
<evidence type="ECO:0000255" key="1">
    <source>
        <dbReference type="HAMAP-Rule" id="MF_00658"/>
    </source>
</evidence>
<accession>A8G4N9</accession>
<name>RLMH_PROM2</name>
<gene>
    <name evidence="1" type="primary">rlmH</name>
    <name type="ordered locus">P9215_09551</name>
</gene>
<comment type="function">
    <text evidence="1">Specifically methylates the pseudouridine at position 1915 (m3Psi1915) in 23S rRNA.</text>
</comment>
<comment type="catalytic activity">
    <reaction evidence="1">
        <text>pseudouridine(1915) in 23S rRNA + S-adenosyl-L-methionine = N(3)-methylpseudouridine(1915) in 23S rRNA + S-adenosyl-L-homocysteine + H(+)</text>
        <dbReference type="Rhea" id="RHEA:42752"/>
        <dbReference type="Rhea" id="RHEA-COMP:10221"/>
        <dbReference type="Rhea" id="RHEA-COMP:10222"/>
        <dbReference type="ChEBI" id="CHEBI:15378"/>
        <dbReference type="ChEBI" id="CHEBI:57856"/>
        <dbReference type="ChEBI" id="CHEBI:59789"/>
        <dbReference type="ChEBI" id="CHEBI:65314"/>
        <dbReference type="ChEBI" id="CHEBI:74486"/>
        <dbReference type="EC" id="2.1.1.177"/>
    </reaction>
</comment>
<comment type="subunit">
    <text evidence="1">Homodimer.</text>
</comment>
<comment type="subcellular location">
    <subcellularLocation>
        <location evidence="1">Cytoplasm</location>
    </subcellularLocation>
</comment>
<comment type="similarity">
    <text evidence="1">Belongs to the RNA methyltransferase RlmH family.</text>
</comment>
<reference key="1">
    <citation type="journal article" date="2007" name="PLoS Genet.">
        <title>Patterns and implications of gene gain and loss in the evolution of Prochlorococcus.</title>
        <authorList>
            <person name="Kettler G.C."/>
            <person name="Martiny A.C."/>
            <person name="Huang K."/>
            <person name="Zucker J."/>
            <person name="Coleman M.L."/>
            <person name="Rodrigue S."/>
            <person name="Chen F."/>
            <person name="Lapidus A."/>
            <person name="Ferriera S."/>
            <person name="Johnson J."/>
            <person name="Steglich C."/>
            <person name="Church G.M."/>
            <person name="Richardson P."/>
            <person name="Chisholm S.W."/>
        </authorList>
    </citation>
    <scope>NUCLEOTIDE SEQUENCE [LARGE SCALE GENOMIC DNA]</scope>
    <source>
        <strain>MIT 9215</strain>
    </source>
</reference>
<protein>
    <recommendedName>
        <fullName evidence="1">Ribosomal RNA large subunit methyltransferase H</fullName>
        <ecNumber evidence="1">2.1.1.177</ecNumber>
    </recommendedName>
    <alternativeName>
        <fullName evidence="1">23S rRNA (pseudouridine1915-N3)-methyltransferase</fullName>
    </alternativeName>
    <alternativeName>
        <fullName evidence="1">23S rRNA m3Psi1915 methyltransferase</fullName>
    </alternativeName>
    <alternativeName>
        <fullName evidence="1">rRNA (pseudouridine-N3-)-methyltransferase RlmH</fullName>
    </alternativeName>
</protein>